<organism>
    <name type="scientific">Bacillus thuringiensis subsp. konkukian (strain 97-27)</name>
    <dbReference type="NCBI Taxonomy" id="281309"/>
    <lineage>
        <taxon>Bacteria</taxon>
        <taxon>Bacillati</taxon>
        <taxon>Bacillota</taxon>
        <taxon>Bacilli</taxon>
        <taxon>Bacillales</taxon>
        <taxon>Bacillaceae</taxon>
        <taxon>Bacillus</taxon>
        <taxon>Bacillus cereus group</taxon>
    </lineage>
</organism>
<feature type="chain" id="PRO_0000175611" description="Holo-[acyl-carrier-protein] synthase">
    <location>
        <begin position="1"/>
        <end position="119"/>
    </location>
</feature>
<feature type="binding site" evidence="1">
    <location>
        <position position="8"/>
    </location>
    <ligand>
        <name>Mg(2+)</name>
        <dbReference type="ChEBI" id="CHEBI:18420"/>
    </ligand>
</feature>
<feature type="binding site" evidence="1">
    <location>
        <position position="58"/>
    </location>
    <ligand>
        <name>Mg(2+)</name>
        <dbReference type="ChEBI" id="CHEBI:18420"/>
    </ligand>
</feature>
<name>ACPS_BACHK</name>
<dbReference type="EC" id="2.7.8.7" evidence="1"/>
<dbReference type="EMBL" id="AE017355">
    <property type="protein sequence ID" value="AAT62521.1"/>
    <property type="molecule type" value="Genomic_DNA"/>
</dbReference>
<dbReference type="RefSeq" id="WP_000635040.1">
    <property type="nucleotide sequence ID" value="NC_005957.1"/>
</dbReference>
<dbReference type="RefSeq" id="YP_034577.1">
    <property type="nucleotide sequence ID" value="NC_005957.1"/>
</dbReference>
<dbReference type="SMR" id="Q6HPE3"/>
<dbReference type="GeneID" id="45020288"/>
<dbReference type="KEGG" id="btk:BT9727_0222"/>
<dbReference type="PATRIC" id="fig|281309.8.peg.238"/>
<dbReference type="HOGENOM" id="CLU_089696_1_2_9"/>
<dbReference type="Proteomes" id="UP000001301">
    <property type="component" value="Chromosome"/>
</dbReference>
<dbReference type="GO" id="GO:0005829">
    <property type="term" value="C:cytosol"/>
    <property type="evidence" value="ECO:0007669"/>
    <property type="project" value="TreeGrafter"/>
</dbReference>
<dbReference type="GO" id="GO:0008897">
    <property type="term" value="F:holo-[acyl-carrier-protein] synthase activity"/>
    <property type="evidence" value="ECO:0007669"/>
    <property type="project" value="UniProtKB-UniRule"/>
</dbReference>
<dbReference type="GO" id="GO:0000287">
    <property type="term" value="F:magnesium ion binding"/>
    <property type="evidence" value="ECO:0007669"/>
    <property type="project" value="UniProtKB-UniRule"/>
</dbReference>
<dbReference type="GO" id="GO:0006633">
    <property type="term" value="P:fatty acid biosynthetic process"/>
    <property type="evidence" value="ECO:0007669"/>
    <property type="project" value="UniProtKB-UniRule"/>
</dbReference>
<dbReference type="GO" id="GO:0019878">
    <property type="term" value="P:lysine biosynthetic process via aminoadipic acid"/>
    <property type="evidence" value="ECO:0007669"/>
    <property type="project" value="TreeGrafter"/>
</dbReference>
<dbReference type="Gene3D" id="3.90.470.20">
    <property type="entry name" value="4'-phosphopantetheinyl transferase domain"/>
    <property type="match status" value="1"/>
</dbReference>
<dbReference type="HAMAP" id="MF_00101">
    <property type="entry name" value="AcpS"/>
    <property type="match status" value="1"/>
</dbReference>
<dbReference type="InterPro" id="IPR008278">
    <property type="entry name" value="4-PPantetheinyl_Trfase_dom"/>
</dbReference>
<dbReference type="InterPro" id="IPR037143">
    <property type="entry name" value="4-PPantetheinyl_Trfase_dom_sf"/>
</dbReference>
<dbReference type="InterPro" id="IPR002582">
    <property type="entry name" value="ACPS"/>
</dbReference>
<dbReference type="InterPro" id="IPR050559">
    <property type="entry name" value="P-Pant_transferase_sf"/>
</dbReference>
<dbReference type="InterPro" id="IPR004568">
    <property type="entry name" value="Ppantetheine-prot_Trfase_dom"/>
</dbReference>
<dbReference type="NCBIfam" id="TIGR00516">
    <property type="entry name" value="acpS"/>
    <property type="match status" value="1"/>
</dbReference>
<dbReference type="NCBIfam" id="TIGR00556">
    <property type="entry name" value="pantethn_trn"/>
    <property type="match status" value="1"/>
</dbReference>
<dbReference type="PANTHER" id="PTHR12215:SF10">
    <property type="entry name" value="L-AMINOADIPATE-SEMIALDEHYDE DEHYDROGENASE-PHOSPHOPANTETHEINYL TRANSFERASE"/>
    <property type="match status" value="1"/>
</dbReference>
<dbReference type="PANTHER" id="PTHR12215">
    <property type="entry name" value="PHOSPHOPANTETHEINE TRANSFERASE"/>
    <property type="match status" value="1"/>
</dbReference>
<dbReference type="Pfam" id="PF01648">
    <property type="entry name" value="ACPS"/>
    <property type="match status" value="1"/>
</dbReference>
<dbReference type="SUPFAM" id="SSF56214">
    <property type="entry name" value="4'-phosphopantetheinyl transferase"/>
    <property type="match status" value="1"/>
</dbReference>
<reference key="1">
    <citation type="journal article" date="2006" name="J. Bacteriol.">
        <title>Pathogenomic sequence analysis of Bacillus cereus and Bacillus thuringiensis isolates closely related to Bacillus anthracis.</title>
        <authorList>
            <person name="Han C.S."/>
            <person name="Xie G."/>
            <person name="Challacombe J.F."/>
            <person name="Altherr M.R."/>
            <person name="Bhotika S.S."/>
            <person name="Bruce D."/>
            <person name="Campbell C.S."/>
            <person name="Campbell M.L."/>
            <person name="Chen J."/>
            <person name="Chertkov O."/>
            <person name="Cleland C."/>
            <person name="Dimitrijevic M."/>
            <person name="Doggett N.A."/>
            <person name="Fawcett J.J."/>
            <person name="Glavina T."/>
            <person name="Goodwin L.A."/>
            <person name="Hill K.K."/>
            <person name="Hitchcock P."/>
            <person name="Jackson P.J."/>
            <person name="Keim P."/>
            <person name="Kewalramani A.R."/>
            <person name="Longmire J."/>
            <person name="Lucas S."/>
            <person name="Malfatti S."/>
            <person name="McMurry K."/>
            <person name="Meincke L.J."/>
            <person name="Misra M."/>
            <person name="Moseman B.L."/>
            <person name="Mundt M."/>
            <person name="Munk A.C."/>
            <person name="Okinaka R.T."/>
            <person name="Parson-Quintana B."/>
            <person name="Reilly L.P."/>
            <person name="Richardson P."/>
            <person name="Robinson D.L."/>
            <person name="Rubin E."/>
            <person name="Saunders E."/>
            <person name="Tapia R."/>
            <person name="Tesmer J.G."/>
            <person name="Thayer N."/>
            <person name="Thompson L.S."/>
            <person name="Tice H."/>
            <person name="Ticknor L.O."/>
            <person name="Wills P.L."/>
            <person name="Brettin T.S."/>
            <person name="Gilna P."/>
        </authorList>
    </citation>
    <scope>NUCLEOTIDE SEQUENCE [LARGE SCALE GENOMIC DNA]</scope>
    <source>
        <strain>97-27</strain>
    </source>
</reference>
<comment type="function">
    <text evidence="1">Transfers the 4'-phosphopantetheine moiety from coenzyme A to a Ser of acyl-carrier-protein.</text>
</comment>
<comment type="catalytic activity">
    <reaction evidence="1">
        <text>apo-[ACP] + CoA = holo-[ACP] + adenosine 3',5'-bisphosphate + H(+)</text>
        <dbReference type="Rhea" id="RHEA:12068"/>
        <dbReference type="Rhea" id="RHEA-COMP:9685"/>
        <dbReference type="Rhea" id="RHEA-COMP:9690"/>
        <dbReference type="ChEBI" id="CHEBI:15378"/>
        <dbReference type="ChEBI" id="CHEBI:29999"/>
        <dbReference type="ChEBI" id="CHEBI:57287"/>
        <dbReference type="ChEBI" id="CHEBI:58343"/>
        <dbReference type="ChEBI" id="CHEBI:64479"/>
        <dbReference type="EC" id="2.7.8.7"/>
    </reaction>
</comment>
<comment type="cofactor">
    <cofactor evidence="1">
        <name>Mg(2+)</name>
        <dbReference type="ChEBI" id="CHEBI:18420"/>
    </cofactor>
</comment>
<comment type="subcellular location">
    <subcellularLocation>
        <location evidence="1">Cytoplasm</location>
    </subcellularLocation>
</comment>
<comment type="similarity">
    <text evidence="1">Belongs to the P-Pant transferase superfamily. AcpS family.</text>
</comment>
<protein>
    <recommendedName>
        <fullName evidence="1">Holo-[acyl-carrier-protein] synthase</fullName>
        <shortName evidence="1">Holo-ACP synthase</shortName>
        <ecNumber evidence="1">2.7.8.7</ecNumber>
    </recommendedName>
    <alternativeName>
        <fullName evidence="1">4'-phosphopantetheinyl transferase AcpS</fullName>
    </alternativeName>
</protein>
<gene>
    <name evidence="1" type="primary">acpS</name>
    <name type="ordered locus">BT9727_0222</name>
</gene>
<evidence type="ECO:0000255" key="1">
    <source>
        <dbReference type="HAMAP-Rule" id="MF_00101"/>
    </source>
</evidence>
<proteinExistence type="inferred from homology"/>
<keyword id="KW-0963">Cytoplasm</keyword>
<keyword id="KW-0275">Fatty acid biosynthesis</keyword>
<keyword id="KW-0276">Fatty acid metabolism</keyword>
<keyword id="KW-0444">Lipid biosynthesis</keyword>
<keyword id="KW-0443">Lipid metabolism</keyword>
<keyword id="KW-0460">Magnesium</keyword>
<keyword id="KW-0479">Metal-binding</keyword>
<keyword id="KW-0808">Transferase</keyword>
<accession>Q6HPE3</accession>
<sequence length="119" mass="13100">MIVGIGIDIIELNRIEKMLDGKLKFMERILTENERNVAKGLKGSRLTEFVAGRFAAKEAYSKAVGTGIGKEVSFLDIEVRNDDRGKPILITSTEHIVHLSISHSKEFAVAQVVLESSSS</sequence>